<proteinExistence type="inferred from homology"/>
<organism>
    <name type="scientific">Pelobacter propionicus (strain DSM 2379 / NBRC 103807 / OttBd1)</name>
    <dbReference type="NCBI Taxonomy" id="338966"/>
    <lineage>
        <taxon>Bacteria</taxon>
        <taxon>Pseudomonadati</taxon>
        <taxon>Thermodesulfobacteriota</taxon>
        <taxon>Desulfuromonadia</taxon>
        <taxon>Desulfuromonadales</taxon>
        <taxon>Desulfuromonadaceae</taxon>
        <taxon>Pelobacter</taxon>
    </lineage>
</organism>
<evidence type="ECO:0000255" key="1">
    <source>
        <dbReference type="HAMAP-Rule" id="MF_01363"/>
    </source>
</evidence>
<evidence type="ECO:0000305" key="2"/>
<gene>
    <name evidence="1" type="primary">rplU</name>
    <name type="ordered locus">Ppro_0349</name>
</gene>
<sequence>MYAVIKTGGKQYKVAEGEFLKVEKLVGEVGDSVEFGEVLMIGGEKIVVGAPHVAGATVTAKIAVQGKDKKILVFKSKRRKGTRKLRGHRQHKTVLKIEKISA</sequence>
<feature type="chain" id="PRO_1000067869" description="Large ribosomal subunit protein bL21">
    <location>
        <begin position="1"/>
        <end position="102"/>
    </location>
</feature>
<protein>
    <recommendedName>
        <fullName evidence="1">Large ribosomal subunit protein bL21</fullName>
    </recommendedName>
    <alternativeName>
        <fullName evidence="2">50S ribosomal protein L21</fullName>
    </alternativeName>
</protein>
<name>RL21_PELPD</name>
<dbReference type="EMBL" id="CP000482">
    <property type="protein sequence ID" value="ABK97983.1"/>
    <property type="molecule type" value="Genomic_DNA"/>
</dbReference>
<dbReference type="RefSeq" id="WP_011734297.1">
    <property type="nucleotide sequence ID" value="NC_008609.1"/>
</dbReference>
<dbReference type="SMR" id="A1AKW3"/>
<dbReference type="STRING" id="338966.Ppro_0349"/>
<dbReference type="KEGG" id="ppd:Ppro_0349"/>
<dbReference type="eggNOG" id="COG0261">
    <property type="taxonomic scope" value="Bacteria"/>
</dbReference>
<dbReference type="HOGENOM" id="CLU_061463_3_2_7"/>
<dbReference type="OrthoDB" id="9813334at2"/>
<dbReference type="Proteomes" id="UP000006732">
    <property type="component" value="Chromosome"/>
</dbReference>
<dbReference type="GO" id="GO:0005737">
    <property type="term" value="C:cytoplasm"/>
    <property type="evidence" value="ECO:0007669"/>
    <property type="project" value="UniProtKB-ARBA"/>
</dbReference>
<dbReference type="GO" id="GO:1990904">
    <property type="term" value="C:ribonucleoprotein complex"/>
    <property type="evidence" value="ECO:0007669"/>
    <property type="project" value="UniProtKB-KW"/>
</dbReference>
<dbReference type="GO" id="GO:0005840">
    <property type="term" value="C:ribosome"/>
    <property type="evidence" value="ECO:0007669"/>
    <property type="project" value="UniProtKB-KW"/>
</dbReference>
<dbReference type="GO" id="GO:0019843">
    <property type="term" value="F:rRNA binding"/>
    <property type="evidence" value="ECO:0007669"/>
    <property type="project" value="UniProtKB-UniRule"/>
</dbReference>
<dbReference type="GO" id="GO:0003735">
    <property type="term" value="F:structural constituent of ribosome"/>
    <property type="evidence" value="ECO:0007669"/>
    <property type="project" value="InterPro"/>
</dbReference>
<dbReference type="GO" id="GO:0006412">
    <property type="term" value="P:translation"/>
    <property type="evidence" value="ECO:0007669"/>
    <property type="project" value="UniProtKB-UniRule"/>
</dbReference>
<dbReference type="HAMAP" id="MF_01363">
    <property type="entry name" value="Ribosomal_bL21"/>
    <property type="match status" value="1"/>
</dbReference>
<dbReference type="InterPro" id="IPR028909">
    <property type="entry name" value="bL21-like"/>
</dbReference>
<dbReference type="InterPro" id="IPR036164">
    <property type="entry name" value="bL21-like_sf"/>
</dbReference>
<dbReference type="InterPro" id="IPR001787">
    <property type="entry name" value="Ribosomal_bL21"/>
</dbReference>
<dbReference type="InterPro" id="IPR018258">
    <property type="entry name" value="Ribosomal_bL21_CS"/>
</dbReference>
<dbReference type="NCBIfam" id="TIGR00061">
    <property type="entry name" value="L21"/>
    <property type="match status" value="1"/>
</dbReference>
<dbReference type="PANTHER" id="PTHR21349">
    <property type="entry name" value="50S RIBOSOMAL PROTEIN L21"/>
    <property type="match status" value="1"/>
</dbReference>
<dbReference type="PANTHER" id="PTHR21349:SF0">
    <property type="entry name" value="LARGE RIBOSOMAL SUBUNIT PROTEIN BL21M"/>
    <property type="match status" value="1"/>
</dbReference>
<dbReference type="Pfam" id="PF00829">
    <property type="entry name" value="Ribosomal_L21p"/>
    <property type="match status" value="1"/>
</dbReference>
<dbReference type="SUPFAM" id="SSF141091">
    <property type="entry name" value="L21p-like"/>
    <property type="match status" value="1"/>
</dbReference>
<dbReference type="PROSITE" id="PS01169">
    <property type="entry name" value="RIBOSOMAL_L21"/>
    <property type="match status" value="1"/>
</dbReference>
<comment type="function">
    <text evidence="1">This protein binds to 23S rRNA in the presence of protein L20.</text>
</comment>
<comment type="subunit">
    <text evidence="1">Part of the 50S ribosomal subunit. Contacts protein L20.</text>
</comment>
<comment type="similarity">
    <text evidence="1">Belongs to the bacterial ribosomal protein bL21 family.</text>
</comment>
<accession>A1AKW3</accession>
<keyword id="KW-1185">Reference proteome</keyword>
<keyword id="KW-0687">Ribonucleoprotein</keyword>
<keyword id="KW-0689">Ribosomal protein</keyword>
<keyword id="KW-0694">RNA-binding</keyword>
<keyword id="KW-0699">rRNA-binding</keyword>
<reference key="1">
    <citation type="submission" date="2006-10" db="EMBL/GenBank/DDBJ databases">
        <title>Complete sequence of chromosome of Pelobacter propionicus DSM 2379.</title>
        <authorList>
            <consortium name="US DOE Joint Genome Institute"/>
            <person name="Copeland A."/>
            <person name="Lucas S."/>
            <person name="Lapidus A."/>
            <person name="Barry K."/>
            <person name="Detter J.C."/>
            <person name="Glavina del Rio T."/>
            <person name="Hammon N."/>
            <person name="Israni S."/>
            <person name="Dalin E."/>
            <person name="Tice H."/>
            <person name="Pitluck S."/>
            <person name="Saunders E."/>
            <person name="Brettin T."/>
            <person name="Bruce D."/>
            <person name="Han C."/>
            <person name="Tapia R."/>
            <person name="Schmutz J."/>
            <person name="Larimer F."/>
            <person name="Land M."/>
            <person name="Hauser L."/>
            <person name="Kyrpides N."/>
            <person name="Kim E."/>
            <person name="Lovley D."/>
            <person name="Richardson P."/>
        </authorList>
    </citation>
    <scope>NUCLEOTIDE SEQUENCE [LARGE SCALE GENOMIC DNA]</scope>
    <source>
        <strain>DSM 2379 / NBRC 103807 / OttBd1</strain>
    </source>
</reference>